<dbReference type="EC" id="1.1.1.94" evidence="1"/>
<dbReference type="EMBL" id="CP001013">
    <property type="protein sequence ID" value="ACB36068.1"/>
    <property type="molecule type" value="Genomic_DNA"/>
</dbReference>
<dbReference type="RefSeq" id="WP_012348815.1">
    <property type="nucleotide sequence ID" value="NC_010524.1"/>
</dbReference>
<dbReference type="SMR" id="B1Y6P0"/>
<dbReference type="STRING" id="395495.Lcho_3814"/>
<dbReference type="KEGG" id="lch:Lcho_3814"/>
<dbReference type="eggNOG" id="COG0240">
    <property type="taxonomic scope" value="Bacteria"/>
</dbReference>
<dbReference type="HOGENOM" id="CLU_033449_0_2_4"/>
<dbReference type="OrthoDB" id="9812273at2"/>
<dbReference type="UniPathway" id="UPA00940"/>
<dbReference type="Proteomes" id="UP000001693">
    <property type="component" value="Chromosome"/>
</dbReference>
<dbReference type="GO" id="GO:0005829">
    <property type="term" value="C:cytosol"/>
    <property type="evidence" value="ECO:0007669"/>
    <property type="project" value="TreeGrafter"/>
</dbReference>
<dbReference type="GO" id="GO:0047952">
    <property type="term" value="F:glycerol-3-phosphate dehydrogenase [NAD(P)+] activity"/>
    <property type="evidence" value="ECO:0007669"/>
    <property type="project" value="UniProtKB-UniRule"/>
</dbReference>
<dbReference type="GO" id="GO:0051287">
    <property type="term" value="F:NAD binding"/>
    <property type="evidence" value="ECO:0007669"/>
    <property type="project" value="InterPro"/>
</dbReference>
<dbReference type="GO" id="GO:0005975">
    <property type="term" value="P:carbohydrate metabolic process"/>
    <property type="evidence" value="ECO:0007669"/>
    <property type="project" value="InterPro"/>
</dbReference>
<dbReference type="GO" id="GO:0046167">
    <property type="term" value="P:glycerol-3-phosphate biosynthetic process"/>
    <property type="evidence" value="ECO:0007669"/>
    <property type="project" value="UniProtKB-UniRule"/>
</dbReference>
<dbReference type="GO" id="GO:0046168">
    <property type="term" value="P:glycerol-3-phosphate catabolic process"/>
    <property type="evidence" value="ECO:0007669"/>
    <property type="project" value="InterPro"/>
</dbReference>
<dbReference type="GO" id="GO:0006650">
    <property type="term" value="P:glycerophospholipid metabolic process"/>
    <property type="evidence" value="ECO:0007669"/>
    <property type="project" value="UniProtKB-UniRule"/>
</dbReference>
<dbReference type="GO" id="GO:0008654">
    <property type="term" value="P:phospholipid biosynthetic process"/>
    <property type="evidence" value="ECO:0007669"/>
    <property type="project" value="UniProtKB-KW"/>
</dbReference>
<dbReference type="FunFam" id="1.10.1040.10:FF:000001">
    <property type="entry name" value="Glycerol-3-phosphate dehydrogenase [NAD(P)+]"/>
    <property type="match status" value="1"/>
</dbReference>
<dbReference type="Gene3D" id="1.10.1040.10">
    <property type="entry name" value="N-(1-d-carboxylethyl)-l-norvaline Dehydrogenase, domain 2"/>
    <property type="match status" value="1"/>
</dbReference>
<dbReference type="Gene3D" id="3.40.50.720">
    <property type="entry name" value="NAD(P)-binding Rossmann-like Domain"/>
    <property type="match status" value="1"/>
</dbReference>
<dbReference type="HAMAP" id="MF_00394">
    <property type="entry name" value="NAD_Glyc3P_dehydrog"/>
    <property type="match status" value="1"/>
</dbReference>
<dbReference type="InterPro" id="IPR008927">
    <property type="entry name" value="6-PGluconate_DH-like_C_sf"/>
</dbReference>
<dbReference type="InterPro" id="IPR013328">
    <property type="entry name" value="6PGD_dom2"/>
</dbReference>
<dbReference type="InterPro" id="IPR006168">
    <property type="entry name" value="G3P_DH_NAD-dep"/>
</dbReference>
<dbReference type="InterPro" id="IPR006109">
    <property type="entry name" value="G3P_DH_NAD-dep_C"/>
</dbReference>
<dbReference type="InterPro" id="IPR011128">
    <property type="entry name" value="G3P_DH_NAD-dep_N"/>
</dbReference>
<dbReference type="InterPro" id="IPR036291">
    <property type="entry name" value="NAD(P)-bd_dom_sf"/>
</dbReference>
<dbReference type="NCBIfam" id="NF000940">
    <property type="entry name" value="PRK00094.1-2"/>
    <property type="match status" value="1"/>
</dbReference>
<dbReference type="NCBIfam" id="NF000942">
    <property type="entry name" value="PRK00094.1-4"/>
    <property type="match status" value="1"/>
</dbReference>
<dbReference type="PANTHER" id="PTHR11728">
    <property type="entry name" value="GLYCEROL-3-PHOSPHATE DEHYDROGENASE"/>
    <property type="match status" value="1"/>
</dbReference>
<dbReference type="PANTHER" id="PTHR11728:SF1">
    <property type="entry name" value="GLYCEROL-3-PHOSPHATE DEHYDROGENASE [NAD(+)] 2, CHLOROPLASTIC"/>
    <property type="match status" value="1"/>
</dbReference>
<dbReference type="Pfam" id="PF07479">
    <property type="entry name" value="NAD_Gly3P_dh_C"/>
    <property type="match status" value="1"/>
</dbReference>
<dbReference type="Pfam" id="PF01210">
    <property type="entry name" value="NAD_Gly3P_dh_N"/>
    <property type="match status" value="1"/>
</dbReference>
<dbReference type="PIRSF" id="PIRSF000114">
    <property type="entry name" value="Glycerol-3-P_dh"/>
    <property type="match status" value="1"/>
</dbReference>
<dbReference type="PRINTS" id="PR00077">
    <property type="entry name" value="GPDHDRGNASE"/>
</dbReference>
<dbReference type="SUPFAM" id="SSF48179">
    <property type="entry name" value="6-phosphogluconate dehydrogenase C-terminal domain-like"/>
    <property type="match status" value="1"/>
</dbReference>
<dbReference type="SUPFAM" id="SSF51735">
    <property type="entry name" value="NAD(P)-binding Rossmann-fold domains"/>
    <property type="match status" value="1"/>
</dbReference>
<dbReference type="PROSITE" id="PS00957">
    <property type="entry name" value="NAD_G3PDH"/>
    <property type="match status" value="1"/>
</dbReference>
<organism>
    <name type="scientific">Leptothrix cholodnii (strain ATCC 51168 / LMG 8142 / SP-6)</name>
    <name type="common">Leptothrix discophora (strain SP-6)</name>
    <dbReference type="NCBI Taxonomy" id="395495"/>
    <lineage>
        <taxon>Bacteria</taxon>
        <taxon>Pseudomonadati</taxon>
        <taxon>Pseudomonadota</taxon>
        <taxon>Betaproteobacteria</taxon>
        <taxon>Burkholderiales</taxon>
        <taxon>Sphaerotilaceae</taxon>
        <taxon>Leptothrix</taxon>
    </lineage>
</organism>
<evidence type="ECO:0000255" key="1">
    <source>
        <dbReference type="HAMAP-Rule" id="MF_00394"/>
    </source>
</evidence>
<reference key="1">
    <citation type="submission" date="2008-03" db="EMBL/GenBank/DDBJ databases">
        <title>Complete sequence of Leptothrix cholodnii SP-6.</title>
        <authorList>
            <consortium name="US DOE Joint Genome Institute"/>
            <person name="Copeland A."/>
            <person name="Lucas S."/>
            <person name="Lapidus A."/>
            <person name="Glavina del Rio T."/>
            <person name="Dalin E."/>
            <person name="Tice H."/>
            <person name="Bruce D."/>
            <person name="Goodwin L."/>
            <person name="Pitluck S."/>
            <person name="Chertkov O."/>
            <person name="Brettin T."/>
            <person name="Detter J.C."/>
            <person name="Han C."/>
            <person name="Kuske C.R."/>
            <person name="Schmutz J."/>
            <person name="Larimer F."/>
            <person name="Land M."/>
            <person name="Hauser L."/>
            <person name="Kyrpides N."/>
            <person name="Lykidis A."/>
            <person name="Emerson D."/>
            <person name="Richardson P."/>
        </authorList>
    </citation>
    <scope>NUCLEOTIDE SEQUENCE [LARGE SCALE GENOMIC DNA]</scope>
    <source>
        <strain>ATCC 51168 / LMG 8142 / SP-6</strain>
    </source>
</reference>
<sequence length="337" mass="34554">MQITVLGAGAWGTAVAAQAALRHPTLLWGRDPAQMAEIAATRRNQRYLPDADLPARLVCSGDWDAALAHVSARAGTDADANGAGLVIVATPMAALREMLARIPQGLPTLWLCKGFEAGTGLLGHEIAREVAPQLACGVLSGPSFALEVARQQPTALVAASQHESVRDAAVRALHGASLRVYASDDPVGVEVGGAVKNVLAIATGIADGMGLGLNARAALITRGLAEMTRLGLALGARAETFMGLSGLGDLVLTATGDLSRNRRVGLRLADGQTLAQILAELGHVSEGVYSAGTVLERAGRLGVDMPITAAVVAVLQGGLAPRDAVAALMQREARAES</sequence>
<comment type="function">
    <text evidence="1">Catalyzes the reduction of the glycolytic intermediate dihydroxyacetone phosphate (DHAP) to sn-glycerol 3-phosphate (G3P), the key precursor for phospholipid synthesis.</text>
</comment>
<comment type="catalytic activity">
    <reaction evidence="1">
        <text>sn-glycerol 3-phosphate + NAD(+) = dihydroxyacetone phosphate + NADH + H(+)</text>
        <dbReference type="Rhea" id="RHEA:11092"/>
        <dbReference type="ChEBI" id="CHEBI:15378"/>
        <dbReference type="ChEBI" id="CHEBI:57540"/>
        <dbReference type="ChEBI" id="CHEBI:57597"/>
        <dbReference type="ChEBI" id="CHEBI:57642"/>
        <dbReference type="ChEBI" id="CHEBI:57945"/>
        <dbReference type="EC" id="1.1.1.94"/>
    </reaction>
    <physiologicalReaction direction="right-to-left" evidence="1">
        <dbReference type="Rhea" id="RHEA:11094"/>
    </physiologicalReaction>
</comment>
<comment type="catalytic activity">
    <reaction evidence="1">
        <text>sn-glycerol 3-phosphate + NADP(+) = dihydroxyacetone phosphate + NADPH + H(+)</text>
        <dbReference type="Rhea" id="RHEA:11096"/>
        <dbReference type="ChEBI" id="CHEBI:15378"/>
        <dbReference type="ChEBI" id="CHEBI:57597"/>
        <dbReference type="ChEBI" id="CHEBI:57642"/>
        <dbReference type="ChEBI" id="CHEBI:57783"/>
        <dbReference type="ChEBI" id="CHEBI:58349"/>
        <dbReference type="EC" id="1.1.1.94"/>
    </reaction>
    <physiologicalReaction direction="right-to-left" evidence="1">
        <dbReference type="Rhea" id="RHEA:11098"/>
    </physiologicalReaction>
</comment>
<comment type="pathway">
    <text evidence="1">Membrane lipid metabolism; glycerophospholipid metabolism.</text>
</comment>
<comment type="subcellular location">
    <subcellularLocation>
        <location evidence="1">Cytoplasm</location>
    </subcellularLocation>
</comment>
<comment type="similarity">
    <text evidence="1">Belongs to the NAD-dependent glycerol-3-phosphate dehydrogenase family.</text>
</comment>
<name>GPDA_LEPCP</name>
<accession>B1Y6P0</accession>
<proteinExistence type="inferred from homology"/>
<protein>
    <recommendedName>
        <fullName evidence="1">Glycerol-3-phosphate dehydrogenase [NAD(P)+]</fullName>
        <ecNumber evidence="1">1.1.1.94</ecNumber>
    </recommendedName>
    <alternativeName>
        <fullName evidence="1">NAD(P)(+)-dependent glycerol-3-phosphate dehydrogenase</fullName>
    </alternativeName>
    <alternativeName>
        <fullName evidence="1">NAD(P)H-dependent dihydroxyacetone-phosphate reductase</fullName>
    </alternativeName>
</protein>
<keyword id="KW-0963">Cytoplasm</keyword>
<keyword id="KW-0444">Lipid biosynthesis</keyword>
<keyword id="KW-0443">Lipid metabolism</keyword>
<keyword id="KW-0520">NAD</keyword>
<keyword id="KW-0521">NADP</keyword>
<keyword id="KW-0547">Nucleotide-binding</keyword>
<keyword id="KW-0560">Oxidoreductase</keyword>
<keyword id="KW-0594">Phospholipid biosynthesis</keyword>
<keyword id="KW-1208">Phospholipid metabolism</keyword>
<keyword id="KW-1185">Reference proteome</keyword>
<gene>
    <name evidence="1" type="primary">gpsA</name>
    <name type="ordered locus">Lcho_3814</name>
</gene>
<feature type="chain" id="PRO_1000123162" description="Glycerol-3-phosphate dehydrogenase [NAD(P)+]">
    <location>
        <begin position="1"/>
        <end position="337"/>
    </location>
</feature>
<feature type="active site" description="Proton acceptor" evidence="1">
    <location>
        <position position="196"/>
    </location>
</feature>
<feature type="binding site" evidence="1">
    <location>
        <position position="11"/>
    </location>
    <ligand>
        <name>NADPH</name>
        <dbReference type="ChEBI" id="CHEBI:57783"/>
    </ligand>
</feature>
<feature type="binding site" evidence="1">
    <location>
        <position position="30"/>
    </location>
    <ligand>
        <name>NADPH</name>
        <dbReference type="ChEBI" id="CHEBI:57783"/>
    </ligand>
</feature>
<feature type="binding site" evidence="1">
    <location>
        <position position="113"/>
    </location>
    <ligand>
        <name>NADPH</name>
        <dbReference type="ChEBI" id="CHEBI:57783"/>
    </ligand>
</feature>
<feature type="binding site" evidence="1">
    <location>
        <position position="113"/>
    </location>
    <ligand>
        <name>sn-glycerol 3-phosphate</name>
        <dbReference type="ChEBI" id="CHEBI:57597"/>
    </ligand>
</feature>
<feature type="binding site" evidence="1">
    <location>
        <position position="141"/>
    </location>
    <ligand>
        <name>sn-glycerol 3-phosphate</name>
        <dbReference type="ChEBI" id="CHEBI:57597"/>
    </ligand>
</feature>
<feature type="binding site" evidence="1">
    <location>
        <position position="143"/>
    </location>
    <ligand>
        <name>sn-glycerol 3-phosphate</name>
        <dbReference type="ChEBI" id="CHEBI:57597"/>
    </ligand>
</feature>
<feature type="binding site" evidence="1">
    <location>
        <position position="145"/>
    </location>
    <ligand>
        <name>NADPH</name>
        <dbReference type="ChEBI" id="CHEBI:57783"/>
    </ligand>
</feature>
<feature type="binding site" evidence="1">
    <location>
        <position position="196"/>
    </location>
    <ligand>
        <name>sn-glycerol 3-phosphate</name>
        <dbReference type="ChEBI" id="CHEBI:57597"/>
    </ligand>
</feature>
<feature type="binding site" evidence="1">
    <location>
        <position position="249"/>
    </location>
    <ligand>
        <name>sn-glycerol 3-phosphate</name>
        <dbReference type="ChEBI" id="CHEBI:57597"/>
    </ligand>
</feature>
<feature type="binding site" evidence="1">
    <location>
        <position position="259"/>
    </location>
    <ligand>
        <name>sn-glycerol 3-phosphate</name>
        <dbReference type="ChEBI" id="CHEBI:57597"/>
    </ligand>
</feature>
<feature type="binding site" evidence="1">
    <location>
        <position position="260"/>
    </location>
    <ligand>
        <name>NADPH</name>
        <dbReference type="ChEBI" id="CHEBI:57783"/>
    </ligand>
</feature>
<feature type="binding site" evidence="1">
    <location>
        <position position="260"/>
    </location>
    <ligand>
        <name>sn-glycerol 3-phosphate</name>
        <dbReference type="ChEBI" id="CHEBI:57597"/>
    </ligand>
</feature>
<feature type="binding site" evidence="1">
    <location>
        <position position="261"/>
    </location>
    <ligand>
        <name>sn-glycerol 3-phosphate</name>
        <dbReference type="ChEBI" id="CHEBI:57597"/>
    </ligand>
</feature>
<feature type="binding site" evidence="1">
    <location>
        <position position="284"/>
    </location>
    <ligand>
        <name>NADPH</name>
        <dbReference type="ChEBI" id="CHEBI:57783"/>
    </ligand>
</feature>
<feature type="binding site" evidence="1">
    <location>
        <position position="286"/>
    </location>
    <ligand>
        <name>NADPH</name>
        <dbReference type="ChEBI" id="CHEBI:57783"/>
    </ligand>
</feature>